<protein>
    <recommendedName>
        <fullName evidence="1">Small ribosomal subunit protein uS5</fullName>
    </recommendedName>
    <alternativeName>
        <fullName evidence="2">30S ribosomal protein S5</fullName>
    </alternativeName>
</protein>
<accession>Q1R627</accession>
<keyword id="KW-0687">Ribonucleoprotein</keyword>
<keyword id="KW-0689">Ribosomal protein</keyword>
<keyword id="KW-0694">RNA-binding</keyword>
<keyword id="KW-0699">rRNA-binding</keyword>
<comment type="function">
    <text evidence="1">With S4 and S12 plays an important role in translational accuracy.</text>
</comment>
<comment type="function">
    <text evidence="1">Located at the back of the 30S subunit body where it stabilizes the conformation of the head with respect to the body.</text>
</comment>
<comment type="subunit">
    <text evidence="1">Part of the 30S ribosomal subunit. Contacts proteins S4 and S8.</text>
</comment>
<comment type="domain">
    <text>The N-terminal domain interacts with the head of the 30S subunit; the C-terminal domain interacts with the body and contacts protein S4. The interaction surface between S4 and S5 is involved in control of translational fidelity.</text>
</comment>
<comment type="similarity">
    <text evidence="1">Belongs to the universal ribosomal protein uS5 family.</text>
</comment>
<reference key="1">
    <citation type="journal article" date="2006" name="Proc. Natl. Acad. Sci. U.S.A.">
        <title>Identification of genes subject to positive selection in uropathogenic strains of Escherichia coli: a comparative genomics approach.</title>
        <authorList>
            <person name="Chen S.L."/>
            <person name="Hung C.-S."/>
            <person name="Xu J."/>
            <person name="Reigstad C.S."/>
            <person name="Magrini V."/>
            <person name="Sabo A."/>
            <person name="Blasiar D."/>
            <person name="Bieri T."/>
            <person name="Meyer R.R."/>
            <person name="Ozersky P."/>
            <person name="Armstrong J.R."/>
            <person name="Fulton R.S."/>
            <person name="Latreille J.P."/>
            <person name="Spieth J."/>
            <person name="Hooton T.M."/>
            <person name="Mardis E.R."/>
            <person name="Hultgren S.J."/>
            <person name="Gordon J.I."/>
        </authorList>
    </citation>
    <scope>NUCLEOTIDE SEQUENCE [LARGE SCALE GENOMIC DNA]</scope>
    <source>
        <strain>UTI89 / UPEC</strain>
    </source>
</reference>
<feature type="chain" id="PRO_1000086008" description="Small ribosomal subunit protein uS5">
    <location>
        <begin position="1"/>
        <end position="167"/>
    </location>
</feature>
<feature type="domain" description="S5 DRBM" evidence="1">
    <location>
        <begin position="11"/>
        <end position="74"/>
    </location>
</feature>
<name>RS5_ECOUT</name>
<evidence type="ECO:0000255" key="1">
    <source>
        <dbReference type="HAMAP-Rule" id="MF_01307"/>
    </source>
</evidence>
<evidence type="ECO:0000305" key="2"/>
<sequence length="167" mass="17603">MAHIEKQAGELQEKLIAVNRVSKTVKGGRIFSFTALTVVGDGNGRVGFGYGKAREVPAAIQKAMEKARRNMINVALNNGTLQHPVKGVHTGSRVFMQPASEGTGIIAGGAMRAVLEVAGVHNVLAKAYGSTNPINVVRATIDGLENMNSPEMVAAKRGKSVEEILGK</sequence>
<gene>
    <name evidence="1" type="primary">rpsE</name>
    <name type="ordered locus">UTI89_C3750</name>
</gene>
<organism>
    <name type="scientific">Escherichia coli (strain UTI89 / UPEC)</name>
    <dbReference type="NCBI Taxonomy" id="364106"/>
    <lineage>
        <taxon>Bacteria</taxon>
        <taxon>Pseudomonadati</taxon>
        <taxon>Pseudomonadota</taxon>
        <taxon>Gammaproteobacteria</taxon>
        <taxon>Enterobacterales</taxon>
        <taxon>Enterobacteriaceae</taxon>
        <taxon>Escherichia</taxon>
    </lineage>
</organism>
<proteinExistence type="inferred from homology"/>
<dbReference type="EMBL" id="CP000243">
    <property type="protein sequence ID" value="ABE09187.1"/>
    <property type="molecule type" value="Genomic_DNA"/>
</dbReference>
<dbReference type="RefSeq" id="WP_000940121.1">
    <property type="nucleotide sequence ID" value="NZ_CP064825.1"/>
</dbReference>
<dbReference type="SMR" id="Q1R627"/>
<dbReference type="GeneID" id="93778684"/>
<dbReference type="KEGG" id="eci:UTI89_C3750"/>
<dbReference type="HOGENOM" id="CLU_065898_2_2_6"/>
<dbReference type="Proteomes" id="UP000001952">
    <property type="component" value="Chromosome"/>
</dbReference>
<dbReference type="GO" id="GO:0015935">
    <property type="term" value="C:small ribosomal subunit"/>
    <property type="evidence" value="ECO:0007669"/>
    <property type="project" value="InterPro"/>
</dbReference>
<dbReference type="GO" id="GO:0019843">
    <property type="term" value="F:rRNA binding"/>
    <property type="evidence" value="ECO:0007669"/>
    <property type="project" value="UniProtKB-UniRule"/>
</dbReference>
<dbReference type="GO" id="GO:0003735">
    <property type="term" value="F:structural constituent of ribosome"/>
    <property type="evidence" value="ECO:0007669"/>
    <property type="project" value="InterPro"/>
</dbReference>
<dbReference type="GO" id="GO:0006412">
    <property type="term" value="P:translation"/>
    <property type="evidence" value="ECO:0007669"/>
    <property type="project" value="UniProtKB-UniRule"/>
</dbReference>
<dbReference type="FunFam" id="3.30.160.20:FF:000001">
    <property type="entry name" value="30S ribosomal protein S5"/>
    <property type="match status" value="1"/>
</dbReference>
<dbReference type="FunFam" id="3.30.230.10:FF:000002">
    <property type="entry name" value="30S ribosomal protein S5"/>
    <property type="match status" value="1"/>
</dbReference>
<dbReference type="Gene3D" id="3.30.160.20">
    <property type="match status" value="1"/>
</dbReference>
<dbReference type="Gene3D" id="3.30.230.10">
    <property type="match status" value="1"/>
</dbReference>
<dbReference type="HAMAP" id="MF_01307_B">
    <property type="entry name" value="Ribosomal_uS5_B"/>
    <property type="match status" value="1"/>
</dbReference>
<dbReference type="InterPro" id="IPR020568">
    <property type="entry name" value="Ribosomal_Su5_D2-typ_SF"/>
</dbReference>
<dbReference type="InterPro" id="IPR000851">
    <property type="entry name" value="Ribosomal_uS5"/>
</dbReference>
<dbReference type="InterPro" id="IPR005712">
    <property type="entry name" value="Ribosomal_uS5_bac-type"/>
</dbReference>
<dbReference type="InterPro" id="IPR005324">
    <property type="entry name" value="Ribosomal_uS5_C"/>
</dbReference>
<dbReference type="InterPro" id="IPR013810">
    <property type="entry name" value="Ribosomal_uS5_N"/>
</dbReference>
<dbReference type="InterPro" id="IPR018192">
    <property type="entry name" value="Ribosomal_uS5_N_CS"/>
</dbReference>
<dbReference type="InterPro" id="IPR014721">
    <property type="entry name" value="Ribsml_uS5_D2-typ_fold_subgr"/>
</dbReference>
<dbReference type="NCBIfam" id="TIGR01021">
    <property type="entry name" value="rpsE_bact"/>
    <property type="match status" value="1"/>
</dbReference>
<dbReference type="PANTHER" id="PTHR48277">
    <property type="entry name" value="MITOCHONDRIAL RIBOSOMAL PROTEIN S5"/>
    <property type="match status" value="1"/>
</dbReference>
<dbReference type="PANTHER" id="PTHR48277:SF1">
    <property type="entry name" value="MITOCHONDRIAL RIBOSOMAL PROTEIN S5"/>
    <property type="match status" value="1"/>
</dbReference>
<dbReference type="Pfam" id="PF00333">
    <property type="entry name" value="Ribosomal_S5"/>
    <property type="match status" value="1"/>
</dbReference>
<dbReference type="Pfam" id="PF03719">
    <property type="entry name" value="Ribosomal_S5_C"/>
    <property type="match status" value="1"/>
</dbReference>
<dbReference type="SUPFAM" id="SSF54768">
    <property type="entry name" value="dsRNA-binding domain-like"/>
    <property type="match status" value="1"/>
</dbReference>
<dbReference type="SUPFAM" id="SSF54211">
    <property type="entry name" value="Ribosomal protein S5 domain 2-like"/>
    <property type="match status" value="1"/>
</dbReference>
<dbReference type="PROSITE" id="PS00585">
    <property type="entry name" value="RIBOSOMAL_S5"/>
    <property type="match status" value="1"/>
</dbReference>
<dbReference type="PROSITE" id="PS50881">
    <property type="entry name" value="S5_DSRBD"/>
    <property type="match status" value="1"/>
</dbReference>